<gene>
    <name evidence="1" type="primary">plsX</name>
    <name type="ordered locus">MYCGA4940</name>
    <name type="ORF">MGA_0181</name>
</gene>
<reference key="1">
    <citation type="journal article" date="2003" name="Microbiology">
        <title>The complete genome sequence of the avian pathogen Mycoplasma gallisepticum strain R(low).</title>
        <authorList>
            <person name="Papazisi L."/>
            <person name="Gorton T.S."/>
            <person name="Kutish G."/>
            <person name="Markham P.F."/>
            <person name="Browning G.F."/>
            <person name="Nguyen D.K."/>
            <person name="Swartzell S."/>
            <person name="Madan A."/>
            <person name="Mahairas G."/>
            <person name="Geary S.J."/>
        </authorList>
    </citation>
    <scope>NUCLEOTIDE SEQUENCE [LARGE SCALE GENOMIC DNA]</scope>
    <source>
        <strain>R(low / passage 15 / clone 2)</strain>
    </source>
</reference>
<accession>Q7NAZ1</accession>
<dbReference type="EC" id="2.3.1.274" evidence="1"/>
<dbReference type="EMBL" id="AE015450">
    <property type="protein sequence ID" value="AAP56844.1"/>
    <property type="status" value="ALT_INIT"/>
    <property type="molecule type" value="Genomic_DNA"/>
</dbReference>
<dbReference type="SMR" id="Q7NAZ1"/>
<dbReference type="KEGG" id="mga:MGA_0181"/>
<dbReference type="HOGENOM" id="CLU_039379_1_1_14"/>
<dbReference type="UniPathway" id="UPA00085"/>
<dbReference type="Proteomes" id="UP000001418">
    <property type="component" value="Chromosome"/>
</dbReference>
<dbReference type="GO" id="GO:0005737">
    <property type="term" value="C:cytoplasm"/>
    <property type="evidence" value="ECO:0007669"/>
    <property type="project" value="UniProtKB-SubCell"/>
</dbReference>
<dbReference type="GO" id="GO:0043811">
    <property type="term" value="F:phosphate:acyl-[acyl carrier protein] acyltransferase activity"/>
    <property type="evidence" value="ECO:0007669"/>
    <property type="project" value="UniProtKB-UniRule"/>
</dbReference>
<dbReference type="GO" id="GO:0006633">
    <property type="term" value="P:fatty acid biosynthetic process"/>
    <property type="evidence" value="ECO:0007669"/>
    <property type="project" value="UniProtKB-UniRule"/>
</dbReference>
<dbReference type="GO" id="GO:0008654">
    <property type="term" value="P:phospholipid biosynthetic process"/>
    <property type="evidence" value="ECO:0007669"/>
    <property type="project" value="UniProtKB-KW"/>
</dbReference>
<dbReference type="Gene3D" id="3.40.718.10">
    <property type="entry name" value="Isopropylmalate Dehydrogenase"/>
    <property type="match status" value="1"/>
</dbReference>
<dbReference type="HAMAP" id="MF_00019">
    <property type="entry name" value="PlsX"/>
    <property type="match status" value="1"/>
</dbReference>
<dbReference type="InterPro" id="IPR003664">
    <property type="entry name" value="FA_synthesis"/>
</dbReference>
<dbReference type="InterPro" id="IPR012281">
    <property type="entry name" value="Phospholipid_synth_PlsX-like"/>
</dbReference>
<dbReference type="NCBIfam" id="TIGR00182">
    <property type="entry name" value="plsX"/>
    <property type="match status" value="1"/>
</dbReference>
<dbReference type="PANTHER" id="PTHR30100">
    <property type="entry name" value="FATTY ACID/PHOSPHOLIPID SYNTHESIS PROTEIN PLSX"/>
    <property type="match status" value="1"/>
</dbReference>
<dbReference type="PANTHER" id="PTHR30100:SF1">
    <property type="entry name" value="PHOSPHATE ACYLTRANSFERASE"/>
    <property type="match status" value="1"/>
</dbReference>
<dbReference type="Pfam" id="PF02504">
    <property type="entry name" value="FA_synthesis"/>
    <property type="match status" value="1"/>
</dbReference>
<dbReference type="PIRSF" id="PIRSF002465">
    <property type="entry name" value="Phsphlp_syn_PlsX"/>
    <property type="match status" value="1"/>
</dbReference>
<dbReference type="SUPFAM" id="SSF53659">
    <property type="entry name" value="Isocitrate/Isopropylmalate dehydrogenase-like"/>
    <property type="match status" value="1"/>
</dbReference>
<comment type="function">
    <text evidence="1">Catalyzes the reversible formation of acyl-phosphate (acyl-PO(4)) from acyl-[acyl-carrier-protein] (acyl-ACP). This enzyme utilizes acyl-ACP as fatty acyl donor, but not acyl-CoA.</text>
</comment>
<comment type="catalytic activity">
    <reaction evidence="1">
        <text>a fatty acyl-[ACP] + phosphate = an acyl phosphate + holo-[ACP]</text>
        <dbReference type="Rhea" id="RHEA:42292"/>
        <dbReference type="Rhea" id="RHEA-COMP:9685"/>
        <dbReference type="Rhea" id="RHEA-COMP:14125"/>
        <dbReference type="ChEBI" id="CHEBI:43474"/>
        <dbReference type="ChEBI" id="CHEBI:59918"/>
        <dbReference type="ChEBI" id="CHEBI:64479"/>
        <dbReference type="ChEBI" id="CHEBI:138651"/>
        <dbReference type="EC" id="2.3.1.274"/>
    </reaction>
</comment>
<comment type="pathway">
    <text evidence="1">Lipid metabolism; phospholipid metabolism.</text>
</comment>
<comment type="subunit">
    <text evidence="1">Homodimer. Probably interacts with PlsY.</text>
</comment>
<comment type="subcellular location">
    <subcellularLocation>
        <location evidence="1">Cytoplasm</location>
    </subcellularLocation>
    <text evidence="1">Associated with the membrane possibly through PlsY.</text>
</comment>
<comment type="similarity">
    <text evidence="1">Belongs to the PlsX family.</text>
</comment>
<comment type="sequence caution" evidence="2">
    <conflict type="erroneous initiation">
        <sequence resource="EMBL-CDS" id="AAP56844"/>
    </conflict>
</comment>
<protein>
    <recommendedName>
        <fullName evidence="1">Phosphate acyltransferase</fullName>
        <ecNumber evidence="1">2.3.1.274</ecNumber>
    </recommendedName>
    <alternativeName>
        <fullName evidence="1">Acyl-ACP phosphotransacylase</fullName>
    </alternativeName>
    <alternativeName>
        <fullName evidence="1">Acyl-[acyl-carrier-protein]--phosphate acyltransferase</fullName>
    </alternativeName>
    <alternativeName>
        <fullName evidence="1">Phosphate-acyl-ACP acyltransferase</fullName>
    </alternativeName>
</protein>
<sequence length="328" mass="36797">MFRIAVDCMGFENSVSEAVKAVIKYAKKHKDLSFVLVGDENQIRPLVENKKYLNYRIVHTTNEIGMSDSVLTAYRKKDSSMYLTIELLKNNEVDTIISAGSSSAYVALTYNLIGKIHHKIKVGFMSYVPTVTKRGFWFLDVGANKEYLGEELYYLGKMANTFITSVFNYQPRLGVLNIGAEKNKGFEYHQVVYNLLENDKTVDFLGFIEPRGLIKGECDLLVSDGYSGNLVLKSLEGALKSVGKILKKNYKINPLGALFSANVIYQITKTFDYKNNAGAVVLGLNKLVLKTHGSADAKQFYSTIRLAHESLLNNLIEKITKECSTFLN</sequence>
<keyword id="KW-0963">Cytoplasm</keyword>
<keyword id="KW-0444">Lipid biosynthesis</keyword>
<keyword id="KW-0443">Lipid metabolism</keyword>
<keyword id="KW-0594">Phospholipid biosynthesis</keyword>
<keyword id="KW-1208">Phospholipid metabolism</keyword>
<keyword id="KW-1185">Reference proteome</keyword>
<keyword id="KW-0808">Transferase</keyword>
<evidence type="ECO:0000255" key="1">
    <source>
        <dbReference type="HAMAP-Rule" id="MF_00019"/>
    </source>
</evidence>
<evidence type="ECO:0000305" key="2"/>
<proteinExistence type="inferred from homology"/>
<organism>
    <name type="scientific">Mycoplasmoides gallisepticum (strain R(low / passage 15 / clone 2))</name>
    <name type="common">Mycoplasma gallisepticum</name>
    <dbReference type="NCBI Taxonomy" id="710127"/>
    <lineage>
        <taxon>Bacteria</taxon>
        <taxon>Bacillati</taxon>
        <taxon>Mycoplasmatota</taxon>
        <taxon>Mycoplasmoidales</taxon>
        <taxon>Mycoplasmoidaceae</taxon>
        <taxon>Mycoplasmoides</taxon>
    </lineage>
</organism>
<name>PLSX_MYCGA</name>
<feature type="chain" id="PRO_0000189904" description="Phosphate acyltransferase">
    <location>
        <begin position="1"/>
        <end position="328"/>
    </location>
</feature>